<gene>
    <name type="primary">yxlF</name>
    <name type="ordered locus">BSU38660</name>
</gene>
<feature type="chain" id="PRO_0000375900" description="Uncharacterized ABC transporter ATP-binding protein YxlF">
    <location>
        <begin position="1"/>
        <end position="295"/>
    </location>
</feature>
<feature type="domain" description="ABC transporter" evidence="1">
    <location>
        <begin position="2"/>
        <end position="226"/>
    </location>
</feature>
<feature type="binding site" evidence="1">
    <location>
        <begin position="34"/>
        <end position="41"/>
    </location>
    <ligand>
        <name>ATP</name>
        <dbReference type="ChEBI" id="CHEBI:30616"/>
    </ligand>
</feature>
<name>YXLF_BACSU</name>
<protein>
    <recommendedName>
        <fullName>Uncharacterized ABC transporter ATP-binding protein YxlF</fullName>
        <ecNumber>7.-.-.-</ecNumber>
    </recommendedName>
</protein>
<accession>P94374</accession>
<accession>Q794Y4</accession>
<keyword id="KW-0067">ATP-binding</keyword>
<keyword id="KW-0547">Nucleotide-binding</keyword>
<keyword id="KW-1185">Reference proteome</keyword>
<keyword id="KW-1278">Translocase</keyword>
<keyword id="KW-0813">Transport</keyword>
<dbReference type="EC" id="7.-.-.-"/>
<dbReference type="EMBL" id="D83026">
    <property type="protein sequence ID" value="BAA11737.1"/>
    <property type="molecule type" value="Genomic_DNA"/>
</dbReference>
<dbReference type="EMBL" id="AL009126">
    <property type="protein sequence ID" value="CAB15892.1"/>
    <property type="molecule type" value="Genomic_DNA"/>
</dbReference>
<dbReference type="PIR" id="A70082">
    <property type="entry name" value="A70082"/>
</dbReference>
<dbReference type="RefSeq" id="NP_391745.1">
    <property type="nucleotide sequence ID" value="NC_000964.3"/>
</dbReference>
<dbReference type="RefSeq" id="WP_003244494.1">
    <property type="nucleotide sequence ID" value="NZ_OZ025638.1"/>
</dbReference>
<dbReference type="SMR" id="P94374"/>
<dbReference type="FunCoup" id="P94374">
    <property type="interactions" value="214"/>
</dbReference>
<dbReference type="STRING" id="224308.BSU38660"/>
<dbReference type="PaxDb" id="224308-BSU38660"/>
<dbReference type="EnsemblBacteria" id="CAB15892">
    <property type="protein sequence ID" value="CAB15892"/>
    <property type="gene ID" value="BSU_38660"/>
</dbReference>
<dbReference type="GeneID" id="938137"/>
<dbReference type="KEGG" id="bsu:BSU38660"/>
<dbReference type="PATRIC" id="fig|224308.179.peg.4185"/>
<dbReference type="eggNOG" id="COG1131">
    <property type="taxonomic scope" value="Bacteria"/>
</dbReference>
<dbReference type="InParanoid" id="P94374"/>
<dbReference type="OrthoDB" id="9804819at2"/>
<dbReference type="PhylomeDB" id="P94374"/>
<dbReference type="BioCyc" id="BSUB:BSU38660-MONOMER"/>
<dbReference type="Proteomes" id="UP000001570">
    <property type="component" value="Chromosome"/>
</dbReference>
<dbReference type="GO" id="GO:0005524">
    <property type="term" value="F:ATP binding"/>
    <property type="evidence" value="ECO:0007669"/>
    <property type="project" value="UniProtKB-KW"/>
</dbReference>
<dbReference type="GO" id="GO:0016887">
    <property type="term" value="F:ATP hydrolysis activity"/>
    <property type="evidence" value="ECO:0007669"/>
    <property type="project" value="InterPro"/>
</dbReference>
<dbReference type="CDD" id="cd03230">
    <property type="entry name" value="ABC_DR_subfamily_A"/>
    <property type="match status" value="1"/>
</dbReference>
<dbReference type="Gene3D" id="3.40.50.300">
    <property type="entry name" value="P-loop containing nucleotide triphosphate hydrolases"/>
    <property type="match status" value="1"/>
</dbReference>
<dbReference type="InterPro" id="IPR003593">
    <property type="entry name" value="AAA+_ATPase"/>
</dbReference>
<dbReference type="InterPro" id="IPR003439">
    <property type="entry name" value="ABC_transporter-like_ATP-bd"/>
</dbReference>
<dbReference type="InterPro" id="IPR017871">
    <property type="entry name" value="ABC_transporter-like_CS"/>
</dbReference>
<dbReference type="InterPro" id="IPR025302">
    <property type="entry name" value="DrrA1-3-like_C"/>
</dbReference>
<dbReference type="InterPro" id="IPR027417">
    <property type="entry name" value="P-loop_NTPase"/>
</dbReference>
<dbReference type="PANTHER" id="PTHR43335:SF11">
    <property type="entry name" value="ABC TRANSPORTER RELATED"/>
    <property type="match status" value="1"/>
</dbReference>
<dbReference type="PANTHER" id="PTHR43335">
    <property type="entry name" value="ABC TRANSPORTER, ATP-BINDING PROTEIN"/>
    <property type="match status" value="1"/>
</dbReference>
<dbReference type="Pfam" id="PF00005">
    <property type="entry name" value="ABC_tran"/>
    <property type="match status" value="1"/>
</dbReference>
<dbReference type="Pfam" id="PF13732">
    <property type="entry name" value="DrrA1-3_C"/>
    <property type="match status" value="1"/>
</dbReference>
<dbReference type="SMART" id="SM00382">
    <property type="entry name" value="AAA"/>
    <property type="match status" value="1"/>
</dbReference>
<dbReference type="SUPFAM" id="SSF52540">
    <property type="entry name" value="P-loop containing nucleoside triphosphate hydrolases"/>
    <property type="match status" value="1"/>
</dbReference>
<dbReference type="PROSITE" id="PS00211">
    <property type="entry name" value="ABC_TRANSPORTER_1"/>
    <property type="match status" value="1"/>
</dbReference>
<dbReference type="PROSITE" id="PS50893">
    <property type="entry name" value="ABC_TRANSPORTER_2"/>
    <property type="match status" value="1"/>
</dbReference>
<evidence type="ECO:0000255" key="1">
    <source>
        <dbReference type="PROSITE-ProRule" id="PRU00434"/>
    </source>
</evidence>
<evidence type="ECO:0000269" key="2">
    <source>
    </source>
</evidence>
<evidence type="ECO:0000305" key="3"/>
<proteinExistence type="evidence at transcript level"/>
<organism>
    <name type="scientific">Bacillus subtilis (strain 168)</name>
    <dbReference type="NCBI Taxonomy" id="224308"/>
    <lineage>
        <taxon>Bacteria</taxon>
        <taxon>Bacillati</taxon>
        <taxon>Bacillota</taxon>
        <taxon>Bacilli</taxon>
        <taxon>Bacillales</taxon>
        <taxon>Bacillaceae</taxon>
        <taxon>Bacillus</taxon>
    </lineage>
</organism>
<reference key="1">
    <citation type="journal article" date="1996" name="Microbiology">
        <title>Sequencing of a 65 kb region of the Bacillus subtilis genome containing the lic and cel loci, and creation of a 177 kb contig covering the gnt-sacXY region.</title>
        <authorList>
            <person name="Yoshida K."/>
            <person name="Shindo K."/>
            <person name="Sano H."/>
            <person name="Seki S."/>
            <person name="Fujimura M."/>
            <person name="Yanai N."/>
            <person name="Miwa Y."/>
            <person name="Fujita Y."/>
        </authorList>
    </citation>
    <scope>NUCLEOTIDE SEQUENCE [GENOMIC DNA]</scope>
    <source>
        <strain>168 / BGSC1A1</strain>
    </source>
</reference>
<reference key="2">
    <citation type="journal article" date="1997" name="Nature">
        <title>The complete genome sequence of the Gram-positive bacterium Bacillus subtilis.</title>
        <authorList>
            <person name="Kunst F."/>
            <person name="Ogasawara N."/>
            <person name="Moszer I."/>
            <person name="Albertini A.M."/>
            <person name="Alloni G."/>
            <person name="Azevedo V."/>
            <person name="Bertero M.G."/>
            <person name="Bessieres P."/>
            <person name="Bolotin A."/>
            <person name="Borchert S."/>
            <person name="Borriss R."/>
            <person name="Boursier L."/>
            <person name="Brans A."/>
            <person name="Braun M."/>
            <person name="Brignell S.C."/>
            <person name="Bron S."/>
            <person name="Brouillet S."/>
            <person name="Bruschi C.V."/>
            <person name="Caldwell B."/>
            <person name="Capuano V."/>
            <person name="Carter N.M."/>
            <person name="Choi S.-K."/>
            <person name="Codani J.-J."/>
            <person name="Connerton I.F."/>
            <person name="Cummings N.J."/>
            <person name="Daniel R.A."/>
            <person name="Denizot F."/>
            <person name="Devine K.M."/>
            <person name="Duesterhoeft A."/>
            <person name="Ehrlich S.D."/>
            <person name="Emmerson P.T."/>
            <person name="Entian K.-D."/>
            <person name="Errington J."/>
            <person name="Fabret C."/>
            <person name="Ferrari E."/>
            <person name="Foulger D."/>
            <person name="Fritz C."/>
            <person name="Fujita M."/>
            <person name="Fujita Y."/>
            <person name="Fuma S."/>
            <person name="Galizzi A."/>
            <person name="Galleron N."/>
            <person name="Ghim S.-Y."/>
            <person name="Glaser P."/>
            <person name="Goffeau A."/>
            <person name="Golightly E.J."/>
            <person name="Grandi G."/>
            <person name="Guiseppi G."/>
            <person name="Guy B.J."/>
            <person name="Haga K."/>
            <person name="Haiech J."/>
            <person name="Harwood C.R."/>
            <person name="Henaut A."/>
            <person name="Hilbert H."/>
            <person name="Holsappel S."/>
            <person name="Hosono S."/>
            <person name="Hullo M.-F."/>
            <person name="Itaya M."/>
            <person name="Jones L.-M."/>
            <person name="Joris B."/>
            <person name="Karamata D."/>
            <person name="Kasahara Y."/>
            <person name="Klaerr-Blanchard M."/>
            <person name="Klein C."/>
            <person name="Kobayashi Y."/>
            <person name="Koetter P."/>
            <person name="Koningstein G."/>
            <person name="Krogh S."/>
            <person name="Kumano M."/>
            <person name="Kurita K."/>
            <person name="Lapidus A."/>
            <person name="Lardinois S."/>
            <person name="Lauber J."/>
            <person name="Lazarevic V."/>
            <person name="Lee S.-M."/>
            <person name="Levine A."/>
            <person name="Liu H."/>
            <person name="Masuda S."/>
            <person name="Mauel C."/>
            <person name="Medigue C."/>
            <person name="Medina N."/>
            <person name="Mellado R.P."/>
            <person name="Mizuno M."/>
            <person name="Moestl D."/>
            <person name="Nakai S."/>
            <person name="Noback M."/>
            <person name="Noone D."/>
            <person name="O'Reilly M."/>
            <person name="Ogawa K."/>
            <person name="Ogiwara A."/>
            <person name="Oudega B."/>
            <person name="Park S.-H."/>
            <person name="Parro V."/>
            <person name="Pohl T.M."/>
            <person name="Portetelle D."/>
            <person name="Porwollik S."/>
            <person name="Prescott A.M."/>
            <person name="Presecan E."/>
            <person name="Pujic P."/>
            <person name="Purnelle B."/>
            <person name="Rapoport G."/>
            <person name="Rey M."/>
            <person name="Reynolds S."/>
            <person name="Rieger M."/>
            <person name="Rivolta C."/>
            <person name="Rocha E."/>
            <person name="Roche B."/>
            <person name="Rose M."/>
            <person name="Sadaie Y."/>
            <person name="Sato T."/>
            <person name="Scanlan E."/>
            <person name="Schleich S."/>
            <person name="Schroeter R."/>
            <person name="Scoffone F."/>
            <person name="Sekiguchi J."/>
            <person name="Sekowska A."/>
            <person name="Seror S.J."/>
            <person name="Serror P."/>
            <person name="Shin B.-S."/>
            <person name="Soldo B."/>
            <person name="Sorokin A."/>
            <person name="Tacconi E."/>
            <person name="Takagi T."/>
            <person name="Takahashi H."/>
            <person name="Takemaru K."/>
            <person name="Takeuchi M."/>
            <person name="Tamakoshi A."/>
            <person name="Tanaka T."/>
            <person name="Terpstra P."/>
            <person name="Tognoni A."/>
            <person name="Tosato V."/>
            <person name="Uchiyama S."/>
            <person name="Vandenbol M."/>
            <person name="Vannier F."/>
            <person name="Vassarotti A."/>
            <person name="Viari A."/>
            <person name="Wambutt R."/>
            <person name="Wedler E."/>
            <person name="Wedler H."/>
            <person name="Weitzenegger T."/>
            <person name="Winters P."/>
            <person name="Wipat A."/>
            <person name="Yamamoto H."/>
            <person name="Yamane K."/>
            <person name="Yasumoto K."/>
            <person name="Yata K."/>
            <person name="Yoshida K."/>
            <person name="Yoshikawa H.-F."/>
            <person name="Zumstein E."/>
            <person name="Yoshikawa H."/>
            <person name="Danchin A."/>
        </authorList>
    </citation>
    <scope>NUCLEOTIDE SEQUENCE [LARGE SCALE GENOMIC DNA]</scope>
    <source>
        <strain>168</strain>
    </source>
</reference>
<reference key="3">
    <citation type="journal article" date="2003" name="J. Biochem.">
        <title>Organization and expression of the Bacillus subtilis sigY operon.</title>
        <authorList>
            <person name="Tojo S."/>
            <person name="Matsunaga M."/>
            <person name="Matsumoto T."/>
            <person name="Kang C.-M."/>
            <person name="Yamaguchi H."/>
            <person name="Asai K."/>
            <person name="Sadaie Y."/>
            <person name="Yoshida K."/>
            <person name="Fujita Y."/>
        </authorList>
    </citation>
    <scope>INDUCTION</scope>
    <source>
        <strain>168</strain>
    </source>
</reference>
<sequence>MLSIESLCKSYRHHEAVKNVSFHVNENECVALLGPNGAGKTTTLQMLAGLLSPTSGTIKLLGEKKLDRRLIGYLPQYPAFYSWMTANEFLTFAGRLSGLSKRKCQEKIGEMLEFVGLHEAAHKRIGGYSGGMKQRLGLAQALLHKPKFLILDEPVSALDPTGRFEVLDMMRELKKHMAVLFSTHVLHDAEQVCDQVVIMKNGEISWKGELQELKQQQQTNVFTLSVKEKLEGWLEEKPYVSAIVYKNPSQAVFELPDIHAGRSLLSDCIRKGLTVTRFEQKTESLEDVYLKVVHA</sequence>
<comment type="induction">
    <text evidence="2">Expression is sigma Y-dependent. Induced upon nitrogen starvation.</text>
</comment>
<comment type="similarity">
    <text evidence="3">Belongs to the ABC transporter superfamily.</text>
</comment>